<name>CH60_STRGN</name>
<comment type="function">
    <text evidence="1">Together with its co-chaperonin GroES, plays an essential role in assisting protein folding. The GroEL-GroES system forms a nano-cage that allows encapsulation of the non-native substrate proteins and provides a physical environment optimized to promote and accelerate protein folding.</text>
</comment>
<comment type="catalytic activity">
    <reaction evidence="1">
        <text>ATP + H2O + a folded polypeptide = ADP + phosphate + an unfolded polypeptide.</text>
        <dbReference type="EC" id="5.6.1.7"/>
    </reaction>
</comment>
<comment type="subunit">
    <text evidence="1">Forms a cylinder of 14 subunits composed of two heptameric rings stacked back-to-back. Interacts with the co-chaperonin GroES.</text>
</comment>
<comment type="subcellular location">
    <subcellularLocation>
        <location evidence="1">Cytoplasm</location>
    </subcellularLocation>
</comment>
<comment type="similarity">
    <text evidence="1">Belongs to the chaperonin (HSP60) family.</text>
</comment>
<protein>
    <recommendedName>
        <fullName evidence="1">Chaperonin GroEL</fullName>
        <ecNumber evidence="1">5.6.1.7</ecNumber>
    </recommendedName>
    <alternativeName>
        <fullName evidence="1">60 kDa chaperonin</fullName>
    </alternativeName>
    <alternativeName>
        <fullName evidence="1">Chaperonin-60</fullName>
        <shortName evidence="1">Cpn60</shortName>
    </alternativeName>
</protein>
<sequence length="540" mass="56770">MAKDIKFSADARSAMVRGVDILADTVKVTLGPKGRNVVLEKSFGSPLITNDGVTIAKEIELEDHFENMGAKLVSEVASKTNDIAGDGTTTATVLTQAIVREGIKNVTAGANPIGIRRGIEAAVATAVSALKETAIPVSNKEAIAQVAAVSSRSEKVGEYISEAMEKVGNDGVITIEESKGMETELDVVEGMQFDRGYLSQYMVTDSEKMVADLDNPYILITDKKISNIQEILPLLESILKTNRPLLIIADDVDGEALPTLVLNKIRGTFNVVAVKAPGFGDRRKAMLEDIAILTGGTVITEDLGLDLKDATIEALGQASKVTVDKDSTVIVEGSGNPEAIANRVAVIKSQIESATSEFDKEKLQERLAKLSGGVAVIKVGAATETELKEMKLRIEDALNATRAAVEEGIVSGGGTAFVSVLDAVAGLELTGDEATGRNIVLRALEEPVRQIALNAGFEGSIVIDRLKNSEAGTGFNAATGEWVNMIEAGIIDPVKVTRSALQNAASVASLILTTEAVVANQPEPASPAPAMDPSMMGGMM</sequence>
<dbReference type="EC" id="5.6.1.7" evidence="1"/>
<dbReference type="EMBL" id="AF338228">
    <property type="protein sequence ID" value="AAL73234.1"/>
    <property type="molecule type" value="Genomic_DNA"/>
</dbReference>
<dbReference type="RefSeq" id="WP_060553822.1">
    <property type="nucleotide sequence ID" value="NZ_CABEIT010000004.1"/>
</dbReference>
<dbReference type="SMR" id="Q8VT58"/>
<dbReference type="GeneID" id="93788162"/>
<dbReference type="GO" id="GO:0005737">
    <property type="term" value="C:cytoplasm"/>
    <property type="evidence" value="ECO:0007669"/>
    <property type="project" value="UniProtKB-SubCell"/>
</dbReference>
<dbReference type="GO" id="GO:0005524">
    <property type="term" value="F:ATP binding"/>
    <property type="evidence" value="ECO:0007669"/>
    <property type="project" value="UniProtKB-UniRule"/>
</dbReference>
<dbReference type="GO" id="GO:0140662">
    <property type="term" value="F:ATP-dependent protein folding chaperone"/>
    <property type="evidence" value="ECO:0007669"/>
    <property type="project" value="InterPro"/>
</dbReference>
<dbReference type="GO" id="GO:0016853">
    <property type="term" value="F:isomerase activity"/>
    <property type="evidence" value="ECO:0007669"/>
    <property type="project" value="UniProtKB-KW"/>
</dbReference>
<dbReference type="GO" id="GO:0051082">
    <property type="term" value="F:unfolded protein binding"/>
    <property type="evidence" value="ECO:0007669"/>
    <property type="project" value="UniProtKB-UniRule"/>
</dbReference>
<dbReference type="GO" id="GO:0042026">
    <property type="term" value="P:protein refolding"/>
    <property type="evidence" value="ECO:0007669"/>
    <property type="project" value="UniProtKB-UniRule"/>
</dbReference>
<dbReference type="CDD" id="cd03344">
    <property type="entry name" value="GroEL"/>
    <property type="match status" value="1"/>
</dbReference>
<dbReference type="FunFam" id="1.10.560.10:FF:000001">
    <property type="entry name" value="60 kDa chaperonin"/>
    <property type="match status" value="1"/>
</dbReference>
<dbReference type="FunFam" id="3.50.7.10:FF:000001">
    <property type="entry name" value="60 kDa chaperonin"/>
    <property type="match status" value="1"/>
</dbReference>
<dbReference type="Gene3D" id="3.50.7.10">
    <property type="entry name" value="GroEL"/>
    <property type="match status" value="1"/>
</dbReference>
<dbReference type="Gene3D" id="1.10.560.10">
    <property type="entry name" value="GroEL-like equatorial domain"/>
    <property type="match status" value="1"/>
</dbReference>
<dbReference type="Gene3D" id="3.30.260.10">
    <property type="entry name" value="TCP-1-like chaperonin intermediate domain"/>
    <property type="match status" value="1"/>
</dbReference>
<dbReference type="HAMAP" id="MF_00600">
    <property type="entry name" value="CH60"/>
    <property type="match status" value="1"/>
</dbReference>
<dbReference type="InterPro" id="IPR018370">
    <property type="entry name" value="Chaperonin_Cpn60_CS"/>
</dbReference>
<dbReference type="InterPro" id="IPR001844">
    <property type="entry name" value="Cpn60/GroEL"/>
</dbReference>
<dbReference type="InterPro" id="IPR002423">
    <property type="entry name" value="Cpn60/GroEL/TCP-1"/>
</dbReference>
<dbReference type="InterPro" id="IPR027409">
    <property type="entry name" value="GroEL-like_apical_dom_sf"/>
</dbReference>
<dbReference type="InterPro" id="IPR027413">
    <property type="entry name" value="GROEL-like_equatorial_sf"/>
</dbReference>
<dbReference type="InterPro" id="IPR027410">
    <property type="entry name" value="TCP-1-like_intermed_sf"/>
</dbReference>
<dbReference type="NCBIfam" id="TIGR02348">
    <property type="entry name" value="GroEL"/>
    <property type="match status" value="1"/>
</dbReference>
<dbReference type="NCBIfam" id="NF000592">
    <property type="entry name" value="PRK00013.1"/>
    <property type="match status" value="1"/>
</dbReference>
<dbReference type="NCBIfam" id="NF009487">
    <property type="entry name" value="PRK12849.1"/>
    <property type="match status" value="1"/>
</dbReference>
<dbReference type="NCBIfam" id="NF009488">
    <property type="entry name" value="PRK12850.1"/>
    <property type="match status" value="1"/>
</dbReference>
<dbReference type="NCBIfam" id="NF009489">
    <property type="entry name" value="PRK12851.1"/>
    <property type="match status" value="1"/>
</dbReference>
<dbReference type="PANTHER" id="PTHR45633">
    <property type="entry name" value="60 KDA HEAT SHOCK PROTEIN, MITOCHONDRIAL"/>
    <property type="match status" value="1"/>
</dbReference>
<dbReference type="Pfam" id="PF00118">
    <property type="entry name" value="Cpn60_TCP1"/>
    <property type="match status" value="1"/>
</dbReference>
<dbReference type="PRINTS" id="PR00298">
    <property type="entry name" value="CHAPERONIN60"/>
</dbReference>
<dbReference type="SUPFAM" id="SSF52029">
    <property type="entry name" value="GroEL apical domain-like"/>
    <property type="match status" value="1"/>
</dbReference>
<dbReference type="SUPFAM" id="SSF48592">
    <property type="entry name" value="GroEL equatorial domain-like"/>
    <property type="match status" value="1"/>
</dbReference>
<dbReference type="SUPFAM" id="SSF54849">
    <property type="entry name" value="GroEL-intermediate domain like"/>
    <property type="match status" value="1"/>
</dbReference>
<dbReference type="PROSITE" id="PS00296">
    <property type="entry name" value="CHAPERONINS_CPN60"/>
    <property type="match status" value="1"/>
</dbReference>
<organism>
    <name type="scientific">Streptococcus gordonii</name>
    <dbReference type="NCBI Taxonomy" id="1302"/>
    <lineage>
        <taxon>Bacteria</taxon>
        <taxon>Bacillati</taxon>
        <taxon>Bacillota</taxon>
        <taxon>Bacilli</taxon>
        <taxon>Lactobacillales</taxon>
        <taxon>Streptococcaceae</taxon>
        <taxon>Streptococcus</taxon>
    </lineage>
</organism>
<proteinExistence type="inferred from homology"/>
<reference key="1">
    <citation type="journal article" date="2002" name="J. Clin. Microbiol.">
        <title>groESL sequence determination, phylogenetic analysis, and species differentiation for viridans group streptococci.</title>
        <authorList>
            <person name="Teng L.-J."/>
            <person name="Hsueh P.R."/>
            <person name="Tsai J.C."/>
            <person name="Chen P.-W."/>
            <person name="Hsu J.-C."/>
            <person name="Lai H.C."/>
            <person name="Lee C.N."/>
            <person name="Ho S.W."/>
        </authorList>
    </citation>
    <scope>NUCLEOTIDE SEQUENCE [GENOMIC DNA]</scope>
    <source>
        <strain>ATCC 10558 / DSM 6777 / LMG 14518 / NCTC 7865 / SK 3</strain>
    </source>
</reference>
<accession>Q8VT58</accession>
<keyword id="KW-0067">ATP-binding</keyword>
<keyword id="KW-0143">Chaperone</keyword>
<keyword id="KW-0963">Cytoplasm</keyword>
<keyword id="KW-0413">Isomerase</keyword>
<keyword id="KW-0547">Nucleotide-binding</keyword>
<evidence type="ECO:0000255" key="1">
    <source>
        <dbReference type="HAMAP-Rule" id="MF_00600"/>
    </source>
</evidence>
<feature type="chain" id="PRO_0000063552" description="Chaperonin GroEL">
    <location>
        <begin position="1"/>
        <end position="540"/>
    </location>
</feature>
<feature type="binding site" evidence="1">
    <location>
        <begin position="29"/>
        <end position="32"/>
    </location>
    <ligand>
        <name>ATP</name>
        <dbReference type="ChEBI" id="CHEBI:30616"/>
    </ligand>
</feature>
<feature type="binding site" evidence="1">
    <location>
        <begin position="86"/>
        <end position="90"/>
    </location>
    <ligand>
        <name>ATP</name>
        <dbReference type="ChEBI" id="CHEBI:30616"/>
    </ligand>
</feature>
<feature type="binding site" evidence="1">
    <location>
        <position position="413"/>
    </location>
    <ligand>
        <name>ATP</name>
        <dbReference type="ChEBI" id="CHEBI:30616"/>
    </ligand>
</feature>
<feature type="binding site" evidence="1">
    <location>
        <begin position="476"/>
        <end position="478"/>
    </location>
    <ligand>
        <name>ATP</name>
        <dbReference type="ChEBI" id="CHEBI:30616"/>
    </ligand>
</feature>
<feature type="binding site" evidence="1">
    <location>
        <position position="492"/>
    </location>
    <ligand>
        <name>ATP</name>
        <dbReference type="ChEBI" id="CHEBI:30616"/>
    </ligand>
</feature>
<gene>
    <name evidence="1" type="primary">groEL</name>
    <name evidence="1" type="synonym">groL</name>
</gene>